<dbReference type="EC" id="2.8.1.4" evidence="1"/>
<dbReference type="EMBL" id="CP001047">
    <property type="protein sequence ID" value="ACF07044.1"/>
    <property type="molecule type" value="Genomic_DNA"/>
</dbReference>
<dbReference type="RefSeq" id="WP_012498001.1">
    <property type="nucleotide sequence ID" value="NC_011025.1"/>
</dbReference>
<dbReference type="SMR" id="B3PLZ2"/>
<dbReference type="STRING" id="243272.MARTH_orf098"/>
<dbReference type="KEGG" id="mat:MARTH_orf098"/>
<dbReference type="eggNOG" id="COG0301">
    <property type="taxonomic scope" value="Bacteria"/>
</dbReference>
<dbReference type="HOGENOM" id="CLU_037952_4_0_14"/>
<dbReference type="UniPathway" id="UPA00060"/>
<dbReference type="Proteomes" id="UP000008812">
    <property type="component" value="Chromosome"/>
</dbReference>
<dbReference type="GO" id="GO:0005829">
    <property type="term" value="C:cytosol"/>
    <property type="evidence" value="ECO:0007669"/>
    <property type="project" value="TreeGrafter"/>
</dbReference>
<dbReference type="GO" id="GO:0005524">
    <property type="term" value="F:ATP binding"/>
    <property type="evidence" value="ECO:0007669"/>
    <property type="project" value="UniProtKB-UniRule"/>
</dbReference>
<dbReference type="GO" id="GO:0004810">
    <property type="term" value="F:CCA tRNA nucleotidyltransferase activity"/>
    <property type="evidence" value="ECO:0007669"/>
    <property type="project" value="InterPro"/>
</dbReference>
<dbReference type="GO" id="GO:0000049">
    <property type="term" value="F:tRNA binding"/>
    <property type="evidence" value="ECO:0007669"/>
    <property type="project" value="UniProtKB-UniRule"/>
</dbReference>
<dbReference type="GO" id="GO:0140741">
    <property type="term" value="F:tRNA-uracil-4 sulfurtransferase activity"/>
    <property type="evidence" value="ECO:0007669"/>
    <property type="project" value="UniProtKB-EC"/>
</dbReference>
<dbReference type="GO" id="GO:0009228">
    <property type="term" value="P:thiamine biosynthetic process"/>
    <property type="evidence" value="ECO:0007669"/>
    <property type="project" value="UniProtKB-KW"/>
</dbReference>
<dbReference type="GO" id="GO:0009229">
    <property type="term" value="P:thiamine diphosphate biosynthetic process"/>
    <property type="evidence" value="ECO:0007669"/>
    <property type="project" value="UniProtKB-UniRule"/>
</dbReference>
<dbReference type="GO" id="GO:0052837">
    <property type="term" value="P:thiazole biosynthetic process"/>
    <property type="evidence" value="ECO:0007669"/>
    <property type="project" value="TreeGrafter"/>
</dbReference>
<dbReference type="GO" id="GO:0002937">
    <property type="term" value="P:tRNA 4-thiouridine biosynthesis"/>
    <property type="evidence" value="ECO:0007669"/>
    <property type="project" value="TreeGrafter"/>
</dbReference>
<dbReference type="CDD" id="cd01712">
    <property type="entry name" value="PPase_ThiI"/>
    <property type="match status" value="1"/>
</dbReference>
<dbReference type="CDD" id="cd11716">
    <property type="entry name" value="THUMP_ThiI"/>
    <property type="match status" value="1"/>
</dbReference>
<dbReference type="FunFam" id="3.40.50.620:FF:000053">
    <property type="entry name" value="Probable tRNA sulfurtransferase"/>
    <property type="match status" value="1"/>
</dbReference>
<dbReference type="Gene3D" id="3.30.2130.30">
    <property type="match status" value="1"/>
</dbReference>
<dbReference type="Gene3D" id="3.40.50.620">
    <property type="entry name" value="HUPs"/>
    <property type="match status" value="1"/>
</dbReference>
<dbReference type="HAMAP" id="MF_00021">
    <property type="entry name" value="ThiI"/>
    <property type="match status" value="1"/>
</dbReference>
<dbReference type="InterPro" id="IPR014729">
    <property type="entry name" value="Rossmann-like_a/b/a_fold"/>
</dbReference>
<dbReference type="InterPro" id="IPR020536">
    <property type="entry name" value="ThiI_AANH"/>
</dbReference>
<dbReference type="InterPro" id="IPR054173">
    <property type="entry name" value="ThiI_fer"/>
</dbReference>
<dbReference type="InterPro" id="IPR049961">
    <property type="entry name" value="ThiI_N"/>
</dbReference>
<dbReference type="InterPro" id="IPR004114">
    <property type="entry name" value="THUMP_dom"/>
</dbReference>
<dbReference type="InterPro" id="IPR049962">
    <property type="entry name" value="THUMP_ThiI"/>
</dbReference>
<dbReference type="InterPro" id="IPR003720">
    <property type="entry name" value="tRNA_STrfase"/>
</dbReference>
<dbReference type="InterPro" id="IPR050102">
    <property type="entry name" value="tRNA_sulfurtransferase_ThiI"/>
</dbReference>
<dbReference type="NCBIfam" id="TIGR00342">
    <property type="entry name" value="tRNA uracil 4-sulfurtransferase ThiI"/>
    <property type="match status" value="1"/>
</dbReference>
<dbReference type="PANTHER" id="PTHR43209">
    <property type="entry name" value="TRNA SULFURTRANSFERASE"/>
    <property type="match status" value="1"/>
</dbReference>
<dbReference type="PANTHER" id="PTHR43209:SF1">
    <property type="entry name" value="TRNA SULFURTRANSFERASE"/>
    <property type="match status" value="1"/>
</dbReference>
<dbReference type="Pfam" id="PF02568">
    <property type="entry name" value="ThiI"/>
    <property type="match status" value="1"/>
</dbReference>
<dbReference type="Pfam" id="PF22025">
    <property type="entry name" value="ThiI_fer"/>
    <property type="match status" value="1"/>
</dbReference>
<dbReference type="Pfam" id="PF02926">
    <property type="entry name" value="THUMP"/>
    <property type="match status" value="1"/>
</dbReference>
<dbReference type="SMART" id="SM00981">
    <property type="entry name" value="THUMP"/>
    <property type="match status" value="1"/>
</dbReference>
<dbReference type="SUPFAM" id="SSF52402">
    <property type="entry name" value="Adenine nucleotide alpha hydrolases-like"/>
    <property type="match status" value="1"/>
</dbReference>
<dbReference type="SUPFAM" id="SSF143437">
    <property type="entry name" value="THUMP domain-like"/>
    <property type="match status" value="1"/>
</dbReference>
<dbReference type="PROSITE" id="PS51165">
    <property type="entry name" value="THUMP"/>
    <property type="match status" value="1"/>
</dbReference>
<reference key="1">
    <citation type="journal article" date="2008" name="Infect. Immun.">
        <title>Genome of Mycoplasma arthritidis.</title>
        <authorList>
            <person name="Dybvig K."/>
            <person name="Zuhua C."/>
            <person name="Lao P."/>
            <person name="Jordan D.S."/>
            <person name="French C.T."/>
            <person name="Tu A.H."/>
            <person name="Loraine A.E."/>
        </authorList>
    </citation>
    <scope>NUCLEOTIDE SEQUENCE [LARGE SCALE GENOMIC DNA]</scope>
    <source>
        <strain>158L3-1</strain>
    </source>
</reference>
<gene>
    <name evidence="1" type="primary">thiI</name>
    <name type="ordered locus">MARTH_orf098</name>
</gene>
<comment type="function">
    <text evidence="1">Catalyzes the ATP-dependent transfer of a sulfur to tRNA to produce 4-thiouridine in position 8 of tRNAs, which functions as a near-UV photosensor. Also catalyzes the transfer of sulfur to the sulfur carrier protein ThiS, forming ThiS-thiocarboxylate. This is a step in the synthesis of thiazole, in the thiamine biosynthesis pathway. The sulfur is donated as persulfide by IscS.</text>
</comment>
<comment type="catalytic activity">
    <reaction evidence="1">
        <text>[ThiI sulfur-carrier protein]-S-sulfanyl-L-cysteine + a uridine in tRNA + 2 reduced [2Fe-2S]-[ferredoxin] + ATP + H(+) = [ThiI sulfur-carrier protein]-L-cysteine + a 4-thiouridine in tRNA + 2 oxidized [2Fe-2S]-[ferredoxin] + AMP + diphosphate</text>
        <dbReference type="Rhea" id="RHEA:24176"/>
        <dbReference type="Rhea" id="RHEA-COMP:10000"/>
        <dbReference type="Rhea" id="RHEA-COMP:10001"/>
        <dbReference type="Rhea" id="RHEA-COMP:13337"/>
        <dbReference type="Rhea" id="RHEA-COMP:13338"/>
        <dbReference type="Rhea" id="RHEA-COMP:13339"/>
        <dbReference type="Rhea" id="RHEA-COMP:13340"/>
        <dbReference type="ChEBI" id="CHEBI:15378"/>
        <dbReference type="ChEBI" id="CHEBI:29950"/>
        <dbReference type="ChEBI" id="CHEBI:30616"/>
        <dbReference type="ChEBI" id="CHEBI:33019"/>
        <dbReference type="ChEBI" id="CHEBI:33737"/>
        <dbReference type="ChEBI" id="CHEBI:33738"/>
        <dbReference type="ChEBI" id="CHEBI:61963"/>
        <dbReference type="ChEBI" id="CHEBI:65315"/>
        <dbReference type="ChEBI" id="CHEBI:136798"/>
        <dbReference type="ChEBI" id="CHEBI:456215"/>
        <dbReference type="EC" id="2.8.1.4"/>
    </reaction>
</comment>
<comment type="catalytic activity">
    <reaction evidence="1">
        <text>[ThiS sulfur-carrier protein]-C-terminal Gly-Gly-AMP + S-sulfanyl-L-cysteinyl-[cysteine desulfurase] + AH2 = [ThiS sulfur-carrier protein]-C-terminal-Gly-aminoethanethioate + L-cysteinyl-[cysteine desulfurase] + A + AMP + 2 H(+)</text>
        <dbReference type="Rhea" id="RHEA:43340"/>
        <dbReference type="Rhea" id="RHEA-COMP:12157"/>
        <dbReference type="Rhea" id="RHEA-COMP:12158"/>
        <dbReference type="Rhea" id="RHEA-COMP:12910"/>
        <dbReference type="Rhea" id="RHEA-COMP:19908"/>
        <dbReference type="ChEBI" id="CHEBI:13193"/>
        <dbReference type="ChEBI" id="CHEBI:15378"/>
        <dbReference type="ChEBI" id="CHEBI:17499"/>
        <dbReference type="ChEBI" id="CHEBI:29950"/>
        <dbReference type="ChEBI" id="CHEBI:61963"/>
        <dbReference type="ChEBI" id="CHEBI:90618"/>
        <dbReference type="ChEBI" id="CHEBI:232372"/>
        <dbReference type="ChEBI" id="CHEBI:456215"/>
    </reaction>
</comment>
<comment type="pathway">
    <text evidence="1">Cofactor biosynthesis; thiamine diphosphate biosynthesis.</text>
</comment>
<comment type="subcellular location">
    <subcellularLocation>
        <location evidence="1">Cytoplasm</location>
    </subcellularLocation>
</comment>
<comment type="similarity">
    <text evidence="1">Belongs to the ThiI family.</text>
</comment>
<feature type="chain" id="PRO_1000090023" description="Probable tRNA sulfurtransferase">
    <location>
        <begin position="1"/>
        <end position="381"/>
    </location>
</feature>
<feature type="domain" description="THUMP" evidence="1">
    <location>
        <begin position="52"/>
        <end position="155"/>
    </location>
</feature>
<feature type="binding site" evidence="1">
    <location>
        <begin position="173"/>
        <end position="174"/>
    </location>
    <ligand>
        <name>ATP</name>
        <dbReference type="ChEBI" id="CHEBI:30616"/>
    </ligand>
</feature>
<feature type="binding site" evidence="1">
    <location>
        <begin position="198"/>
        <end position="199"/>
    </location>
    <ligand>
        <name>ATP</name>
        <dbReference type="ChEBI" id="CHEBI:30616"/>
    </ligand>
</feature>
<feature type="binding site" evidence="1">
    <location>
        <position position="255"/>
    </location>
    <ligand>
        <name>ATP</name>
        <dbReference type="ChEBI" id="CHEBI:30616"/>
    </ligand>
</feature>
<feature type="binding site" evidence="1">
    <location>
        <position position="277"/>
    </location>
    <ligand>
        <name>ATP</name>
        <dbReference type="ChEBI" id="CHEBI:30616"/>
    </ligand>
</feature>
<feature type="binding site" evidence="1">
    <location>
        <position position="286"/>
    </location>
    <ligand>
        <name>ATP</name>
        <dbReference type="ChEBI" id="CHEBI:30616"/>
    </ligand>
</feature>
<sequence>MYQKILIRYGELTLKGQNKRDFINDLKRNLMFHIPKEQIKMEYDRAFLDFSLTNLDALKYVFGISSYSCVYEVESSLAAITSKVLDIAKQKYPFKTFAIAARRHNKNFEMNSNDLNRHLGCAILSNFEVKVNLEEPDLKIYVEVRDASTYIFIDYIAGLGGMPLNSAGQVLHLMSGGIDSPVAAYLLQKRGLRINFLNFITPPHTDEKTTQKVDELIKVIAKYQGSAKLYQVNFTDIMNYIGLVSNQKYKIILMRRSFYRIAQMLAKKLHIKALSNGENLAQVASQTLEAIHTVSAPITLPIFRPLLSFDKNETIKIAEKIGTMPISILKACETCELFAPKNPIIKPTPEEASELEKELDKLPELEKLAVENVTIKTISTL</sequence>
<protein>
    <recommendedName>
        <fullName evidence="1">Probable tRNA sulfurtransferase</fullName>
        <ecNumber evidence="1">2.8.1.4</ecNumber>
    </recommendedName>
    <alternativeName>
        <fullName evidence="1">Sulfur carrier protein ThiS sulfurtransferase</fullName>
    </alternativeName>
    <alternativeName>
        <fullName evidence="1">Thiamine biosynthesis protein ThiI</fullName>
    </alternativeName>
    <alternativeName>
        <fullName evidence="1">tRNA 4-thiouridine synthase</fullName>
    </alternativeName>
</protein>
<keyword id="KW-0067">ATP-binding</keyword>
<keyword id="KW-0963">Cytoplasm</keyword>
<keyword id="KW-0547">Nucleotide-binding</keyword>
<keyword id="KW-1185">Reference proteome</keyword>
<keyword id="KW-0694">RNA-binding</keyword>
<keyword id="KW-0784">Thiamine biosynthesis</keyword>
<keyword id="KW-0808">Transferase</keyword>
<keyword id="KW-0820">tRNA-binding</keyword>
<accession>B3PLZ2</accession>
<name>THII_META1</name>
<proteinExistence type="inferred from homology"/>
<organism>
    <name type="scientific">Metamycoplasma arthritidis (strain 158L3-1)</name>
    <name type="common">Mycoplasma arthritidis</name>
    <dbReference type="NCBI Taxonomy" id="243272"/>
    <lineage>
        <taxon>Bacteria</taxon>
        <taxon>Bacillati</taxon>
        <taxon>Mycoplasmatota</taxon>
        <taxon>Mycoplasmoidales</taxon>
        <taxon>Metamycoplasmataceae</taxon>
        <taxon>Metamycoplasma</taxon>
    </lineage>
</organism>
<evidence type="ECO:0000255" key="1">
    <source>
        <dbReference type="HAMAP-Rule" id="MF_00021"/>
    </source>
</evidence>